<reference evidence="6" key="1">
    <citation type="submission" date="2008-06" db="EMBL/GenBank/DDBJ databases">
        <authorList>
            <consortium name="NIH - Xenopus Gene Collection (XGC) project"/>
        </authorList>
    </citation>
    <scope>NUCLEOTIDE SEQUENCE [LARGE SCALE MRNA]</scope>
    <source>
        <tissue evidence="6">Tail bud</tissue>
    </source>
</reference>
<proteinExistence type="evidence at transcript level"/>
<keyword id="KW-0010">Activator</keyword>
<keyword id="KW-0238">DNA-binding</keyword>
<keyword id="KW-0371">Homeobox</keyword>
<keyword id="KW-0539">Nucleus</keyword>
<keyword id="KW-1185">Reference proteome</keyword>
<keyword id="KW-0804">Transcription</keyword>
<keyword id="KW-0805">Transcription regulation</keyword>
<accession>B3DM47</accession>
<evidence type="ECO:0000250" key="1">
    <source>
        <dbReference type="UniProtKB" id="P40425"/>
    </source>
</evidence>
<evidence type="ECO:0000255" key="2"/>
<evidence type="ECO:0000255" key="3">
    <source>
        <dbReference type="PROSITE-ProRule" id="PRU00108"/>
    </source>
</evidence>
<evidence type="ECO:0000255" key="4">
    <source>
        <dbReference type="PROSITE-ProRule" id="PRU01322"/>
    </source>
</evidence>
<evidence type="ECO:0000256" key="5">
    <source>
        <dbReference type="SAM" id="MobiDB-lite"/>
    </source>
</evidence>
<evidence type="ECO:0000312" key="6">
    <source>
        <dbReference type="EMBL" id="AAI67699.1"/>
    </source>
</evidence>
<feature type="chain" id="PRO_0000365100" description="Pre-B-cell leukemia transcription factor 2">
    <location>
        <begin position="1"/>
        <end position="422"/>
    </location>
</feature>
<feature type="domain" description="PBC" evidence="4">
    <location>
        <begin position="42"/>
        <end position="236"/>
    </location>
</feature>
<feature type="DNA-binding region" description="Homeobox" evidence="3">
    <location>
        <begin position="237"/>
        <end position="299"/>
    </location>
</feature>
<feature type="region of interest" description="Disordered" evidence="5">
    <location>
        <begin position="1"/>
        <end position="43"/>
    </location>
</feature>
<feature type="region of interest" description="PBC-A" evidence="4">
    <location>
        <begin position="49"/>
        <end position="128"/>
    </location>
</feature>
<feature type="region of interest" description="PBC-B" evidence="4">
    <location>
        <begin position="131"/>
        <end position="236"/>
    </location>
</feature>
<feature type="region of interest" description="Disordered" evidence="5">
    <location>
        <begin position="319"/>
        <end position="341"/>
    </location>
</feature>
<feature type="region of interest" description="Disordered" evidence="5">
    <location>
        <begin position="353"/>
        <end position="422"/>
    </location>
</feature>
<feature type="compositionally biased region" description="Basic and acidic residues" evidence="5">
    <location>
        <begin position="31"/>
        <end position="43"/>
    </location>
</feature>
<feature type="compositionally biased region" description="Polar residues" evidence="5">
    <location>
        <begin position="401"/>
        <end position="410"/>
    </location>
</feature>
<protein>
    <recommendedName>
        <fullName evidence="1">Pre-B-cell leukemia transcription factor 2</fullName>
    </recommendedName>
    <alternativeName>
        <fullName evidence="1">Homeobox protein pbx2</fullName>
    </alternativeName>
</protein>
<gene>
    <name evidence="6" type="primary">pbx2</name>
</gene>
<sequence>MDEQGRLMQARGVGIPGHPIHGGPQTLTPHPMHEPPADNGEPRKQDIGDILQQIMTITDQSLDEAQAKKHALNCHRMKPALFSVLCEIKEKTGLSIRNTQEEEPVDPQLMRLDNMLLAEGVAGPEKGGGSAAAAAAAAASGGVSPDNSIEHSDYRNKLSQIRQIYHAELEKYEQACNEFTTHVMNLLREQSRTRPISPKEIERMVGIIHRKFSSIQMQLKQSTCEAVMILRSRFLDARRKRRNFSKQATEVLNEYFYSHLSNPYPSEEAKEELAKKCGITVSQVSNWFGNKRIRYKKNIGKFQEEANIYAVKTAVSVAQGGHSGANSPTTPTSAGSGGSFNLSGSNDMFMAMQGLNGDSYPPSQVESLRHTMGPGYSDSLSANQMYSPREIRANGGWQEAVTPSSVTSPTEGPGSVHSDTSN</sequence>
<name>PBX2_XENTR</name>
<organism>
    <name type="scientific">Xenopus tropicalis</name>
    <name type="common">Western clawed frog</name>
    <name type="synonym">Silurana tropicalis</name>
    <dbReference type="NCBI Taxonomy" id="8364"/>
    <lineage>
        <taxon>Eukaryota</taxon>
        <taxon>Metazoa</taxon>
        <taxon>Chordata</taxon>
        <taxon>Craniata</taxon>
        <taxon>Vertebrata</taxon>
        <taxon>Euteleostomi</taxon>
        <taxon>Amphibia</taxon>
        <taxon>Batrachia</taxon>
        <taxon>Anura</taxon>
        <taxon>Pipoidea</taxon>
        <taxon>Pipidae</taxon>
        <taxon>Xenopodinae</taxon>
        <taxon>Xenopus</taxon>
        <taxon>Silurana</taxon>
    </lineage>
</organism>
<comment type="function">
    <text evidence="1">Transcriptional activator that binds the sequence 5'-ATCAATCAA-3'.</text>
</comment>
<comment type="subcellular location">
    <subcellularLocation>
        <location evidence="1 3">Nucleus</location>
    </subcellularLocation>
</comment>
<comment type="similarity">
    <text evidence="2">Belongs to the TALE/PBX homeobox family.</text>
</comment>
<dbReference type="EMBL" id="BC167699">
    <property type="protein sequence ID" value="AAI67699.1"/>
    <property type="molecule type" value="mRNA"/>
</dbReference>
<dbReference type="RefSeq" id="NP_001122133.1">
    <property type="nucleotide sequence ID" value="NM_001128661.1"/>
</dbReference>
<dbReference type="SMR" id="B3DM47"/>
<dbReference type="FunCoup" id="B3DM47">
    <property type="interactions" value="2553"/>
</dbReference>
<dbReference type="STRING" id="8364.ENSXETP00000047860"/>
<dbReference type="PaxDb" id="8364-ENSXETP00000001070"/>
<dbReference type="GeneID" id="100101713"/>
<dbReference type="KEGG" id="xtr:100101713"/>
<dbReference type="AGR" id="Xenbase:XB-GENE-484669"/>
<dbReference type="CTD" id="5089"/>
<dbReference type="Xenbase" id="XB-GENE-484669">
    <property type="gene designation" value="pbx2"/>
</dbReference>
<dbReference type="eggNOG" id="KOG0774">
    <property type="taxonomic scope" value="Eukaryota"/>
</dbReference>
<dbReference type="HOGENOM" id="CLU_041153_0_0_1"/>
<dbReference type="InParanoid" id="B3DM47"/>
<dbReference type="OMA" id="DLARQCN"/>
<dbReference type="OrthoDB" id="4187154at2759"/>
<dbReference type="PhylomeDB" id="B3DM47"/>
<dbReference type="Proteomes" id="UP000008143">
    <property type="component" value="Chromosome 8"/>
</dbReference>
<dbReference type="Bgee" id="ENSXETG00000005223">
    <property type="expression patterns" value="Expressed in neurula embryo and 14 other cell types or tissues"/>
</dbReference>
<dbReference type="GO" id="GO:0005634">
    <property type="term" value="C:nucleus"/>
    <property type="evidence" value="ECO:0000250"/>
    <property type="project" value="UniProtKB"/>
</dbReference>
<dbReference type="GO" id="GO:0005667">
    <property type="term" value="C:transcription regulator complex"/>
    <property type="evidence" value="ECO:0000250"/>
    <property type="project" value="UniProtKB"/>
</dbReference>
<dbReference type="GO" id="GO:0003682">
    <property type="term" value="F:chromatin binding"/>
    <property type="evidence" value="ECO:0000250"/>
    <property type="project" value="UniProtKB"/>
</dbReference>
<dbReference type="GO" id="GO:0003677">
    <property type="term" value="F:DNA binding"/>
    <property type="evidence" value="ECO:0007669"/>
    <property type="project" value="UniProtKB-KW"/>
</dbReference>
<dbReference type="GO" id="GO:0000981">
    <property type="term" value="F:DNA-binding transcription factor activity, RNA polymerase II-specific"/>
    <property type="evidence" value="ECO:0007669"/>
    <property type="project" value="InterPro"/>
</dbReference>
<dbReference type="GO" id="GO:0048513">
    <property type="term" value="P:animal organ development"/>
    <property type="evidence" value="ECO:0007669"/>
    <property type="project" value="UniProtKB-ARBA"/>
</dbReference>
<dbReference type="GO" id="GO:0045944">
    <property type="term" value="P:positive regulation of transcription by RNA polymerase II"/>
    <property type="evidence" value="ECO:0000250"/>
    <property type="project" value="UniProtKB"/>
</dbReference>
<dbReference type="CDD" id="cd00086">
    <property type="entry name" value="homeodomain"/>
    <property type="match status" value="1"/>
</dbReference>
<dbReference type="FunFam" id="1.10.10.60:FF:000008">
    <property type="entry name" value="Pre-B-cell leukemia transcription factor 1"/>
    <property type="match status" value="1"/>
</dbReference>
<dbReference type="Gene3D" id="1.10.10.60">
    <property type="entry name" value="Homeodomain-like"/>
    <property type="match status" value="1"/>
</dbReference>
<dbReference type="InterPro" id="IPR001356">
    <property type="entry name" value="HD"/>
</dbReference>
<dbReference type="InterPro" id="IPR017970">
    <property type="entry name" value="Homeobox_CS"/>
</dbReference>
<dbReference type="InterPro" id="IPR009057">
    <property type="entry name" value="Homeodomain-like_sf"/>
</dbReference>
<dbReference type="InterPro" id="IPR008422">
    <property type="entry name" value="KN_HD"/>
</dbReference>
<dbReference type="InterPro" id="IPR005542">
    <property type="entry name" value="PBX_PBC_dom"/>
</dbReference>
<dbReference type="InterPro" id="IPR050224">
    <property type="entry name" value="TALE_homeobox"/>
</dbReference>
<dbReference type="PANTHER" id="PTHR11850">
    <property type="entry name" value="HOMEOBOX PROTEIN TRANSCRIPTION FACTORS"/>
    <property type="match status" value="1"/>
</dbReference>
<dbReference type="Pfam" id="PF05920">
    <property type="entry name" value="Homeobox_KN"/>
    <property type="match status" value="1"/>
</dbReference>
<dbReference type="Pfam" id="PF03792">
    <property type="entry name" value="PBC"/>
    <property type="match status" value="1"/>
</dbReference>
<dbReference type="SMART" id="SM00389">
    <property type="entry name" value="HOX"/>
    <property type="match status" value="1"/>
</dbReference>
<dbReference type="SUPFAM" id="SSF46689">
    <property type="entry name" value="Homeodomain-like"/>
    <property type="match status" value="1"/>
</dbReference>
<dbReference type="PROSITE" id="PS00027">
    <property type="entry name" value="HOMEOBOX_1"/>
    <property type="match status" value="1"/>
</dbReference>
<dbReference type="PROSITE" id="PS50071">
    <property type="entry name" value="HOMEOBOX_2"/>
    <property type="match status" value="1"/>
</dbReference>
<dbReference type="PROSITE" id="PS51978">
    <property type="entry name" value="PBC"/>
    <property type="match status" value="1"/>
</dbReference>